<feature type="chain" id="PRO_1000075967" description="UDP-N-acetylglucosamine 1-carboxyvinyltransferase">
    <location>
        <begin position="1"/>
        <end position="434"/>
    </location>
</feature>
<feature type="active site" description="Proton donor" evidence="1">
    <location>
        <position position="117"/>
    </location>
</feature>
<feature type="binding site" evidence="1">
    <location>
        <begin position="22"/>
        <end position="23"/>
    </location>
    <ligand>
        <name>phosphoenolpyruvate</name>
        <dbReference type="ChEBI" id="CHEBI:58702"/>
    </ligand>
</feature>
<feature type="binding site" evidence="1">
    <location>
        <position position="93"/>
    </location>
    <ligand>
        <name>UDP-N-acetyl-alpha-D-glucosamine</name>
        <dbReference type="ChEBI" id="CHEBI:57705"/>
    </ligand>
</feature>
<feature type="binding site" evidence="1">
    <location>
        <position position="307"/>
    </location>
    <ligand>
        <name>UDP-N-acetyl-alpha-D-glucosamine</name>
        <dbReference type="ChEBI" id="CHEBI:57705"/>
    </ligand>
</feature>
<feature type="binding site" evidence="1">
    <location>
        <position position="329"/>
    </location>
    <ligand>
        <name>UDP-N-acetyl-alpha-D-glucosamine</name>
        <dbReference type="ChEBI" id="CHEBI:57705"/>
    </ligand>
</feature>
<feature type="modified residue" description="2-(S-cysteinyl)pyruvic acid O-phosphothioketal" evidence="1">
    <location>
        <position position="117"/>
    </location>
</feature>
<protein>
    <recommendedName>
        <fullName evidence="1">UDP-N-acetylglucosamine 1-carboxyvinyltransferase</fullName>
        <ecNumber evidence="1">2.5.1.7</ecNumber>
    </recommendedName>
    <alternativeName>
        <fullName evidence="1">Enoylpyruvate transferase</fullName>
    </alternativeName>
    <alternativeName>
        <fullName evidence="1">UDP-N-acetylglucosamine enolpyruvyl transferase</fullName>
        <shortName evidence="1">EPT</shortName>
    </alternativeName>
</protein>
<name>MURA_COXBN</name>
<evidence type="ECO:0000255" key="1">
    <source>
        <dbReference type="HAMAP-Rule" id="MF_00111"/>
    </source>
</evidence>
<comment type="function">
    <text evidence="1">Cell wall formation. Adds enolpyruvyl to UDP-N-acetylglucosamine.</text>
</comment>
<comment type="catalytic activity">
    <reaction evidence="1">
        <text>phosphoenolpyruvate + UDP-N-acetyl-alpha-D-glucosamine = UDP-N-acetyl-3-O-(1-carboxyvinyl)-alpha-D-glucosamine + phosphate</text>
        <dbReference type="Rhea" id="RHEA:18681"/>
        <dbReference type="ChEBI" id="CHEBI:43474"/>
        <dbReference type="ChEBI" id="CHEBI:57705"/>
        <dbReference type="ChEBI" id="CHEBI:58702"/>
        <dbReference type="ChEBI" id="CHEBI:68483"/>
        <dbReference type="EC" id="2.5.1.7"/>
    </reaction>
</comment>
<comment type="pathway">
    <text evidence="1">Cell wall biogenesis; peptidoglycan biosynthesis.</text>
</comment>
<comment type="subcellular location">
    <subcellularLocation>
        <location evidence="1">Cytoplasm</location>
    </subcellularLocation>
</comment>
<comment type="similarity">
    <text evidence="1">Belongs to the EPSP synthase family. MurA subfamily.</text>
</comment>
<accession>A9KDT8</accession>
<keyword id="KW-0131">Cell cycle</keyword>
<keyword id="KW-0132">Cell division</keyword>
<keyword id="KW-0133">Cell shape</keyword>
<keyword id="KW-0961">Cell wall biogenesis/degradation</keyword>
<keyword id="KW-0963">Cytoplasm</keyword>
<keyword id="KW-0573">Peptidoglycan synthesis</keyword>
<keyword id="KW-0670">Pyruvate</keyword>
<keyword id="KW-0808">Transferase</keyword>
<dbReference type="EC" id="2.5.1.7" evidence="1"/>
<dbReference type="EMBL" id="CP000733">
    <property type="protein sequence ID" value="ABS77531.1"/>
    <property type="molecule type" value="Genomic_DNA"/>
</dbReference>
<dbReference type="RefSeq" id="WP_005771755.1">
    <property type="nucleotide sequence ID" value="NC_009727.1"/>
</dbReference>
<dbReference type="SMR" id="A9KDT8"/>
<dbReference type="KEGG" id="cbd:CBUD_0764"/>
<dbReference type="HOGENOM" id="CLU_027387_0_0_6"/>
<dbReference type="UniPathway" id="UPA00219"/>
<dbReference type="Proteomes" id="UP000008555">
    <property type="component" value="Chromosome"/>
</dbReference>
<dbReference type="GO" id="GO:0005737">
    <property type="term" value="C:cytoplasm"/>
    <property type="evidence" value="ECO:0007669"/>
    <property type="project" value="UniProtKB-SubCell"/>
</dbReference>
<dbReference type="GO" id="GO:0008760">
    <property type="term" value="F:UDP-N-acetylglucosamine 1-carboxyvinyltransferase activity"/>
    <property type="evidence" value="ECO:0007669"/>
    <property type="project" value="UniProtKB-UniRule"/>
</dbReference>
<dbReference type="GO" id="GO:0051301">
    <property type="term" value="P:cell division"/>
    <property type="evidence" value="ECO:0007669"/>
    <property type="project" value="UniProtKB-KW"/>
</dbReference>
<dbReference type="GO" id="GO:0071555">
    <property type="term" value="P:cell wall organization"/>
    <property type="evidence" value="ECO:0007669"/>
    <property type="project" value="UniProtKB-KW"/>
</dbReference>
<dbReference type="GO" id="GO:0009252">
    <property type="term" value="P:peptidoglycan biosynthetic process"/>
    <property type="evidence" value="ECO:0007669"/>
    <property type="project" value="UniProtKB-UniRule"/>
</dbReference>
<dbReference type="GO" id="GO:0008360">
    <property type="term" value="P:regulation of cell shape"/>
    <property type="evidence" value="ECO:0007669"/>
    <property type="project" value="UniProtKB-KW"/>
</dbReference>
<dbReference type="GO" id="GO:0019277">
    <property type="term" value="P:UDP-N-acetylgalactosamine biosynthetic process"/>
    <property type="evidence" value="ECO:0007669"/>
    <property type="project" value="InterPro"/>
</dbReference>
<dbReference type="CDD" id="cd01555">
    <property type="entry name" value="UdpNAET"/>
    <property type="match status" value="1"/>
</dbReference>
<dbReference type="FunFam" id="3.65.10.10:FF:000001">
    <property type="entry name" value="UDP-N-acetylglucosamine 1-carboxyvinyltransferase"/>
    <property type="match status" value="1"/>
</dbReference>
<dbReference type="FunFam" id="3.65.10.10:FF:000002">
    <property type="entry name" value="UDP-N-acetylglucosamine 1-carboxyvinyltransferase"/>
    <property type="match status" value="1"/>
</dbReference>
<dbReference type="Gene3D" id="3.65.10.10">
    <property type="entry name" value="Enolpyruvate transferase domain"/>
    <property type="match status" value="2"/>
</dbReference>
<dbReference type="HAMAP" id="MF_00111">
    <property type="entry name" value="MurA"/>
    <property type="match status" value="1"/>
</dbReference>
<dbReference type="InterPro" id="IPR001986">
    <property type="entry name" value="Enolpyruvate_Tfrase_dom"/>
</dbReference>
<dbReference type="InterPro" id="IPR036968">
    <property type="entry name" value="Enolpyruvate_Tfrase_sf"/>
</dbReference>
<dbReference type="InterPro" id="IPR050068">
    <property type="entry name" value="MurA_subfamily"/>
</dbReference>
<dbReference type="InterPro" id="IPR013792">
    <property type="entry name" value="RNA3'P_cycl/enolpyr_Trfase_a/b"/>
</dbReference>
<dbReference type="InterPro" id="IPR005750">
    <property type="entry name" value="UDP_GlcNAc_COvinyl_MurA"/>
</dbReference>
<dbReference type="NCBIfam" id="TIGR01072">
    <property type="entry name" value="murA"/>
    <property type="match status" value="1"/>
</dbReference>
<dbReference type="NCBIfam" id="NF006873">
    <property type="entry name" value="PRK09369.1"/>
    <property type="match status" value="1"/>
</dbReference>
<dbReference type="PANTHER" id="PTHR43783">
    <property type="entry name" value="UDP-N-ACETYLGLUCOSAMINE 1-CARBOXYVINYLTRANSFERASE"/>
    <property type="match status" value="1"/>
</dbReference>
<dbReference type="PANTHER" id="PTHR43783:SF1">
    <property type="entry name" value="UDP-N-ACETYLGLUCOSAMINE 1-CARBOXYVINYLTRANSFERASE"/>
    <property type="match status" value="1"/>
</dbReference>
<dbReference type="Pfam" id="PF00275">
    <property type="entry name" value="EPSP_synthase"/>
    <property type="match status" value="1"/>
</dbReference>
<dbReference type="SUPFAM" id="SSF55205">
    <property type="entry name" value="EPT/RTPC-like"/>
    <property type="match status" value="1"/>
</dbReference>
<proteinExistence type="inferred from homology"/>
<sequence>MDKLIIVGGVPLNGSIRISGAKNAVLPILAATLLIEEPVILSNIPHLNDVTTMIELLGRMGAQITIDERMSIEVDCSQIQNVHASYELVKTMRASILVLGPLLSRFGKAEVSLPGGCAIGSRPVDVHIDGMRALGADIELVDGFIHATVEGRLKGAELNLGKITVTGTENLIMAATLAEGQTIIHNAACEPEVQDLANFLNKMGARISGAGTDTIVIDGVDRLSGGSYSILPDRIEAGTYLVAAAMTRGHVRIRDVFPKTLGAVLEKLHEAGARVKIGENWVDLDMQGRRAKAVDIVTAPYPEMPTDMQAQFMALNVVAEGQAVITETVFENRFMHVHELQRMGADIKLQGSKALIRGKEKLTGAPVMATDLRASAGLVLAGLMARGNTIVDRIYHIDRGYECIEEKLAQLGAEIRRVSSHVYAARYAAQKRWL</sequence>
<gene>
    <name evidence="1" type="primary">murA</name>
    <name type="ordered locus">CBUD_0764</name>
</gene>
<organism>
    <name type="scientific">Coxiella burnetii (strain Dugway 5J108-111)</name>
    <dbReference type="NCBI Taxonomy" id="434922"/>
    <lineage>
        <taxon>Bacteria</taxon>
        <taxon>Pseudomonadati</taxon>
        <taxon>Pseudomonadota</taxon>
        <taxon>Gammaproteobacteria</taxon>
        <taxon>Legionellales</taxon>
        <taxon>Coxiellaceae</taxon>
        <taxon>Coxiella</taxon>
    </lineage>
</organism>
<reference key="1">
    <citation type="journal article" date="2009" name="Infect. Immun.">
        <title>Comparative genomics reveal extensive transposon-mediated genomic plasticity and diversity among potential effector proteins within the genus Coxiella.</title>
        <authorList>
            <person name="Beare P.A."/>
            <person name="Unsworth N."/>
            <person name="Andoh M."/>
            <person name="Voth D.E."/>
            <person name="Omsland A."/>
            <person name="Gilk S.D."/>
            <person name="Williams K.P."/>
            <person name="Sobral B.W."/>
            <person name="Kupko J.J. III"/>
            <person name="Porcella S.F."/>
            <person name="Samuel J.E."/>
            <person name="Heinzen R.A."/>
        </authorList>
    </citation>
    <scope>NUCLEOTIDE SEQUENCE [LARGE SCALE GENOMIC DNA]</scope>
    <source>
        <strain>Dugway 5J108-111</strain>
    </source>
</reference>